<feature type="chain" id="PRO_0000103201" description="4-hydroxy-tetrahydrodipicolinate synthase">
    <location>
        <begin position="1"/>
        <end position="283"/>
    </location>
</feature>
<feature type="active site" description="Proton donor/acceptor" evidence="1">
    <location>
        <position position="134"/>
    </location>
</feature>
<feature type="active site" description="Schiff-base intermediate with substrate" evidence="1">
    <location>
        <position position="162"/>
    </location>
</feature>
<feature type="binding site" evidence="1">
    <location>
        <position position="46"/>
    </location>
    <ligand>
        <name>pyruvate</name>
        <dbReference type="ChEBI" id="CHEBI:15361"/>
    </ligand>
</feature>
<feature type="binding site" evidence="1">
    <location>
        <position position="208"/>
    </location>
    <ligand>
        <name>pyruvate</name>
        <dbReference type="ChEBI" id="CHEBI:15361"/>
    </ligand>
</feature>
<feature type="site" description="Part of a proton relay during catalysis" evidence="1">
    <location>
        <position position="45"/>
    </location>
</feature>
<feature type="site" description="Part of a proton relay during catalysis" evidence="1">
    <location>
        <position position="108"/>
    </location>
</feature>
<evidence type="ECO:0000255" key="1">
    <source>
        <dbReference type="HAMAP-Rule" id="MF_00418"/>
    </source>
</evidence>
<evidence type="ECO:0000305" key="2"/>
<organism>
    <name type="scientific">Methanothermobacter thermautotrophicus (strain ATCC 29096 / DSM 1053 / JCM 10044 / NBRC 100330 / Delta H)</name>
    <name type="common">Methanobacterium thermoautotrophicum</name>
    <dbReference type="NCBI Taxonomy" id="187420"/>
    <lineage>
        <taxon>Archaea</taxon>
        <taxon>Methanobacteriati</taxon>
        <taxon>Methanobacteriota</taxon>
        <taxon>Methanomada group</taxon>
        <taxon>Methanobacteria</taxon>
        <taxon>Methanobacteriales</taxon>
        <taxon>Methanobacteriaceae</taxon>
        <taxon>Methanothermobacter</taxon>
    </lineage>
</organism>
<dbReference type="EC" id="4.3.3.7" evidence="1"/>
<dbReference type="EMBL" id="AE000666">
    <property type="protein sequence ID" value="AAB85301.1"/>
    <property type="molecule type" value="Genomic_DNA"/>
</dbReference>
<dbReference type="PIR" id="A69207">
    <property type="entry name" value="A69207"/>
</dbReference>
<dbReference type="SMR" id="O26892"/>
<dbReference type="FunCoup" id="O26892">
    <property type="interactions" value="113"/>
</dbReference>
<dbReference type="STRING" id="187420.MTH_801"/>
<dbReference type="PaxDb" id="187420-MTH_801"/>
<dbReference type="EnsemblBacteria" id="AAB85301">
    <property type="protein sequence ID" value="AAB85301"/>
    <property type="gene ID" value="MTH_801"/>
</dbReference>
<dbReference type="KEGG" id="mth:MTH_801"/>
<dbReference type="PATRIC" id="fig|187420.15.peg.786"/>
<dbReference type="HOGENOM" id="CLU_049343_7_1_2"/>
<dbReference type="InParanoid" id="O26892"/>
<dbReference type="UniPathway" id="UPA00034">
    <property type="reaction ID" value="UER00017"/>
</dbReference>
<dbReference type="Proteomes" id="UP000005223">
    <property type="component" value="Chromosome"/>
</dbReference>
<dbReference type="GO" id="GO:0005737">
    <property type="term" value="C:cytoplasm"/>
    <property type="evidence" value="ECO:0007669"/>
    <property type="project" value="UniProtKB-SubCell"/>
</dbReference>
<dbReference type="GO" id="GO:0008675">
    <property type="term" value="F:2-dehydro-3-deoxy-phosphogluconate aldolase activity"/>
    <property type="evidence" value="ECO:0007669"/>
    <property type="project" value="UniProtKB-ARBA"/>
</dbReference>
<dbReference type="GO" id="GO:0008840">
    <property type="term" value="F:4-hydroxy-tetrahydrodipicolinate synthase activity"/>
    <property type="evidence" value="ECO:0007669"/>
    <property type="project" value="UniProtKB-UniRule"/>
</dbReference>
<dbReference type="GO" id="GO:0019877">
    <property type="term" value="P:diaminopimelate biosynthetic process"/>
    <property type="evidence" value="ECO:0007669"/>
    <property type="project" value="UniProtKB-UniRule"/>
</dbReference>
<dbReference type="GO" id="GO:0009089">
    <property type="term" value="P:lysine biosynthetic process via diaminopimelate"/>
    <property type="evidence" value="ECO:0007669"/>
    <property type="project" value="UniProtKB-UniRule"/>
</dbReference>
<dbReference type="CDD" id="cd00950">
    <property type="entry name" value="DHDPS"/>
    <property type="match status" value="1"/>
</dbReference>
<dbReference type="Gene3D" id="3.20.20.70">
    <property type="entry name" value="Aldolase class I"/>
    <property type="match status" value="1"/>
</dbReference>
<dbReference type="HAMAP" id="MF_00418">
    <property type="entry name" value="DapA"/>
    <property type="match status" value="1"/>
</dbReference>
<dbReference type="InterPro" id="IPR013785">
    <property type="entry name" value="Aldolase_TIM"/>
</dbReference>
<dbReference type="InterPro" id="IPR005263">
    <property type="entry name" value="DapA"/>
</dbReference>
<dbReference type="InterPro" id="IPR002220">
    <property type="entry name" value="DapA-like"/>
</dbReference>
<dbReference type="InterPro" id="IPR020625">
    <property type="entry name" value="Schiff_base-form_aldolases_AS"/>
</dbReference>
<dbReference type="InterPro" id="IPR020624">
    <property type="entry name" value="Schiff_base-form_aldolases_CS"/>
</dbReference>
<dbReference type="NCBIfam" id="TIGR00674">
    <property type="entry name" value="dapA"/>
    <property type="match status" value="1"/>
</dbReference>
<dbReference type="PANTHER" id="PTHR12128:SF66">
    <property type="entry name" value="4-HYDROXY-2-OXOGLUTARATE ALDOLASE, MITOCHONDRIAL"/>
    <property type="match status" value="1"/>
</dbReference>
<dbReference type="PANTHER" id="PTHR12128">
    <property type="entry name" value="DIHYDRODIPICOLINATE SYNTHASE"/>
    <property type="match status" value="1"/>
</dbReference>
<dbReference type="Pfam" id="PF00701">
    <property type="entry name" value="DHDPS"/>
    <property type="match status" value="1"/>
</dbReference>
<dbReference type="PIRSF" id="PIRSF001365">
    <property type="entry name" value="DHDPS"/>
    <property type="match status" value="1"/>
</dbReference>
<dbReference type="PRINTS" id="PR00146">
    <property type="entry name" value="DHPICSNTHASE"/>
</dbReference>
<dbReference type="SMART" id="SM01130">
    <property type="entry name" value="DHDPS"/>
    <property type="match status" value="1"/>
</dbReference>
<dbReference type="SUPFAM" id="SSF51569">
    <property type="entry name" value="Aldolase"/>
    <property type="match status" value="1"/>
</dbReference>
<dbReference type="PROSITE" id="PS00665">
    <property type="entry name" value="DHDPS_1"/>
    <property type="match status" value="1"/>
</dbReference>
<dbReference type="PROSITE" id="PS00666">
    <property type="entry name" value="DHDPS_2"/>
    <property type="match status" value="1"/>
</dbReference>
<protein>
    <recommendedName>
        <fullName evidence="1">4-hydroxy-tetrahydrodipicolinate synthase</fullName>
        <shortName evidence="1">HTPA synthase</shortName>
        <ecNumber evidence="1">4.3.3.7</ecNumber>
    </recommendedName>
</protein>
<gene>
    <name evidence="1" type="primary">dapA</name>
    <name type="ordered locus">MTH_801</name>
</gene>
<keyword id="KW-0028">Amino-acid biosynthesis</keyword>
<keyword id="KW-0963">Cytoplasm</keyword>
<keyword id="KW-0220">Diaminopimelate biosynthesis</keyword>
<keyword id="KW-0456">Lyase</keyword>
<keyword id="KW-0457">Lysine biosynthesis</keyword>
<keyword id="KW-1185">Reference proteome</keyword>
<keyword id="KW-0704">Schiff base</keyword>
<accession>O26892</accession>
<sequence>MKIEGTVVAMVTPFTEDDVVDEAGLRENINYLIENGVDGLLVAGTTGESATITHEEQRRMIDILVDEVNGRVRTVAGAGSNSSREAMGLVEYAEDAGADAALVITPYYNKPQPHGLIEHYTMLEEAADIPLIIYNVPSRTGTDIDVDTVAELAKLDGIIGIKEASPDLDKVSMLRSRLMDLGLDDFTVLSGNDNLTLPMISMGAEGVISVVANVDPARMSRLVNEALSGDFESAMKTHYELYSLMKVLFIESNPVPVKEALNMMGKARGSCEDAPGTPAGCKP</sequence>
<proteinExistence type="inferred from homology"/>
<name>DAPA_METTH</name>
<comment type="function">
    <text evidence="1">Catalyzes the condensation of (S)-aspartate-beta-semialdehyde [(S)-ASA] and pyruvate to 4-hydroxy-tetrahydrodipicolinate (HTPA).</text>
</comment>
<comment type="catalytic activity">
    <reaction evidence="1">
        <text>L-aspartate 4-semialdehyde + pyruvate = (2S,4S)-4-hydroxy-2,3,4,5-tetrahydrodipicolinate + H2O + H(+)</text>
        <dbReference type="Rhea" id="RHEA:34171"/>
        <dbReference type="ChEBI" id="CHEBI:15361"/>
        <dbReference type="ChEBI" id="CHEBI:15377"/>
        <dbReference type="ChEBI" id="CHEBI:15378"/>
        <dbReference type="ChEBI" id="CHEBI:67139"/>
        <dbReference type="ChEBI" id="CHEBI:537519"/>
        <dbReference type="EC" id="4.3.3.7"/>
    </reaction>
</comment>
<comment type="pathway">
    <text evidence="1">Amino-acid biosynthesis; L-lysine biosynthesis via DAP pathway; (S)-tetrahydrodipicolinate from L-aspartate: step 3/4.</text>
</comment>
<comment type="subunit">
    <text evidence="1">Homotetramer; dimer of dimers.</text>
</comment>
<comment type="subcellular location">
    <subcellularLocation>
        <location evidence="1">Cytoplasm</location>
    </subcellularLocation>
</comment>
<comment type="similarity">
    <text evidence="1">Belongs to the DapA family.</text>
</comment>
<comment type="caution">
    <text evidence="2">Was originally thought to be a dihydrodipicolinate synthase (DHDPS), catalyzing the condensation of (S)-aspartate-beta-semialdehyde [(S)-ASA] and pyruvate to dihydrodipicolinate (DHDP). However, it was shown in E.coli that the product of the enzymatic reaction is not dihydrodipicolinate but in fact (4S)-4-hydroxy-2,3,4,5-tetrahydro-(2S)-dipicolinic acid (HTPA), and that the consecutive dehydration reaction leading to DHDP is not spontaneous but catalyzed by DapB.</text>
</comment>
<reference key="1">
    <citation type="journal article" date="1997" name="J. Bacteriol.">
        <title>Complete genome sequence of Methanobacterium thermoautotrophicum deltaH: functional analysis and comparative genomics.</title>
        <authorList>
            <person name="Smith D.R."/>
            <person name="Doucette-Stamm L.A."/>
            <person name="Deloughery C."/>
            <person name="Lee H.-M."/>
            <person name="Dubois J."/>
            <person name="Aldredge T."/>
            <person name="Bashirzadeh R."/>
            <person name="Blakely D."/>
            <person name="Cook R."/>
            <person name="Gilbert K."/>
            <person name="Harrison D."/>
            <person name="Hoang L."/>
            <person name="Keagle P."/>
            <person name="Lumm W."/>
            <person name="Pothier B."/>
            <person name="Qiu D."/>
            <person name="Spadafora R."/>
            <person name="Vicare R."/>
            <person name="Wang Y."/>
            <person name="Wierzbowski J."/>
            <person name="Gibson R."/>
            <person name="Jiwani N."/>
            <person name="Caruso A."/>
            <person name="Bush D."/>
            <person name="Safer H."/>
            <person name="Patwell D."/>
            <person name="Prabhakar S."/>
            <person name="McDougall S."/>
            <person name="Shimer G."/>
            <person name="Goyal A."/>
            <person name="Pietrovski S."/>
            <person name="Church G.M."/>
            <person name="Daniels C.J."/>
            <person name="Mao J.-I."/>
            <person name="Rice P."/>
            <person name="Noelling J."/>
            <person name="Reeve J.N."/>
        </authorList>
    </citation>
    <scope>NUCLEOTIDE SEQUENCE [LARGE SCALE GENOMIC DNA]</scope>
    <source>
        <strain>ATCC 29096 / DSM 1053 / JCM 10044 / NBRC 100330 / Delta H</strain>
    </source>
</reference>